<sequence length="230" mass="25754">MQPEVSDQIFYAFLTGGLCASSTSTTVTSSSDPFATVYEDKALASLRNHKEAERKRRARINSHLNKLRKLLSCNSKTDKSTLLAKVVQRVKELKQQTLEITDETIPSETDEISVLNIEDCSRGDDRRIIFKVSFCCEDRPELLKDLMETLKSLQMETLFADMTTVGGRTRNVLVVAADKEHHGVQSVNFLQNALKSLLERSSKSVMVGHGGGGGEERLKRRRALDHIIMV</sequence>
<protein>
    <recommendedName>
        <fullName>Putative transcription factor bHLH107</fullName>
    </recommendedName>
    <alternativeName>
        <fullName>Basic helix-loop-helix protein 107</fullName>
        <shortName>AtbHLH107</shortName>
        <shortName>bHLH 107</shortName>
    </alternativeName>
    <alternativeName>
        <fullName>Transcription factor EN 55</fullName>
    </alternativeName>
    <alternativeName>
        <fullName>bHLH transcription factor bHLH107</fullName>
    </alternativeName>
</protein>
<comment type="subunit">
    <text evidence="2">Homodimer.</text>
</comment>
<comment type="subcellular location">
    <subcellularLocation>
        <location evidence="1">Nucleus</location>
    </subcellularLocation>
</comment>
<comment type="alternative products">
    <event type="alternative splicing"/>
    <isoform>
        <id>Q9LET0-1</id>
        <name>1</name>
        <sequence type="displayed"/>
    </isoform>
    <text>A number of isoforms are produced. According to EST sequences.</text>
</comment>
<gene>
    <name type="primary">BHLH107</name>
    <name type="synonym">EN55</name>
    <name type="ordered locus">At3g56770</name>
    <name type="ORF">T8M16.100</name>
</gene>
<proteinExistence type="inferred from homology"/>
<organism>
    <name type="scientific">Arabidopsis thaliana</name>
    <name type="common">Mouse-ear cress</name>
    <dbReference type="NCBI Taxonomy" id="3702"/>
    <lineage>
        <taxon>Eukaryota</taxon>
        <taxon>Viridiplantae</taxon>
        <taxon>Streptophyta</taxon>
        <taxon>Embryophyta</taxon>
        <taxon>Tracheophyta</taxon>
        <taxon>Spermatophyta</taxon>
        <taxon>Magnoliopsida</taxon>
        <taxon>eudicotyledons</taxon>
        <taxon>Gunneridae</taxon>
        <taxon>Pentapetalae</taxon>
        <taxon>rosids</taxon>
        <taxon>malvids</taxon>
        <taxon>Brassicales</taxon>
        <taxon>Brassicaceae</taxon>
        <taxon>Camelineae</taxon>
        <taxon>Arabidopsis</taxon>
    </lineage>
</organism>
<feature type="chain" id="PRO_0000358794" description="Putative transcription factor bHLH107">
    <location>
        <begin position="1"/>
        <end position="230"/>
    </location>
</feature>
<feature type="domain" description="bHLH" evidence="1">
    <location>
        <begin position="44"/>
        <end position="93"/>
    </location>
</feature>
<reference key="1">
    <citation type="journal article" date="2000" name="Nature">
        <title>Sequence and analysis of chromosome 3 of the plant Arabidopsis thaliana.</title>
        <authorList>
            <person name="Salanoubat M."/>
            <person name="Lemcke K."/>
            <person name="Rieger M."/>
            <person name="Ansorge W."/>
            <person name="Unseld M."/>
            <person name="Fartmann B."/>
            <person name="Valle G."/>
            <person name="Bloecker H."/>
            <person name="Perez-Alonso M."/>
            <person name="Obermaier B."/>
            <person name="Delseny M."/>
            <person name="Boutry M."/>
            <person name="Grivell L.A."/>
            <person name="Mache R."/>
            <person name="Puigdomenech P."/>
            <person name="De Simone V."/>
            <person name="Choisne N."/>
            <person name="Artiguenave F."/>
            <person name="Robert C."/>
            <person name="Brottier P."/>
            <person name="Wincker P."/>
            <person name="Cattolico L."/>
            <person name="Weissenbach J."/>
            <person name="Saurin W."/>
            <person name="Quetier F."/>
            <person name="Schaefer M."/>
            <person name="Mueller-Auer S."/>
            <person name="Gabel C."/>
            <person name="Fuchs M."/>
            <person name="Benes V."/>
            <person name="Wurmbach E."/>
            <person name="Drzonek H."/>
            <person name="Erfle H."/>
            <person name="Jordan N."/>
            <person name="Bangert S."/>
            <person name="Wiedelmann R."/>
            <person name="Kranz H."/>
            <person name="Voss H."/>
            <person name="Holland R."/>
            <person name="Brandt P."/>
            <person name="Nyakatura G."/>
            <person name="Vezzi A."/>
            <person name="D'Angelo M."/>
            <person name="Pallavicini A."/>
            <person name="Toppo S."/>
            <person name="Simionati B."/>
            <person name="Conrad A."/>
            <person name="Hornischer K."/>
            <person name="Kauer G."/>
            <person name="Loehnert T.-H."/>
            <person name="Nordsiek G."/>
            <person name="Reichelt J."/>
            <person name="Scharfe M."/>
            <person name="Schoen O."/>
            <person name="Bargues M."/>
            <person name="Terol J."/>
            <person name="Climent J."/>
            <person name="Navarro P."/>
            <person name="Collado C."/>
            <person name="Perez-Perez A."/>
            <person name="Ottenwaelder B."/>
            <person name="Duchemin D."/>
            <person name="Cooke R."/>
            <person name="Laudie M."/>
            <person name="Berger-Llauro C."/>
            <person name="Purnelle B."/>
            <person name="Masuy D."/>
            <person name="de Haan M."/>
            <person name="Maarse A.C."/>
            <person name="Alcaraz J.-P."/>
            <person name="Cottet A."/>
            <person name="Casacuberta E."/>
            <person name="Monfort A."/>
            <person name="Argiriou A."/>
            <person name="Flores M."/>
            <person name="Liguori R."/>
            <person name="Vitale D."/>
            <person name="Mannhaupt G."/>
            <person name="Haase D."/>
            <person name="Schoof H."/>
            <person name="Rudd S."/>
            <person name="Zaccaria P."/>
            <person name="Mewes H.-W."/>
            <person name="Mayer K.F.X."/>
            <person name="Kaul S."/>
            <person name="Town C.D."/>
            <person name="Koo H.L."/>
            <person name="Tallon L.J."/>
            <person name="Jenkins J."/>
            <person name="Rooney T."/>
            <person name="Rizzo M."/>
            <person name="Walts A."/>
            <person name="Utterback T."/>
            <person name="Fujii C.Y."/>
            <person name="Shea T.P."/>
            <person name="Creasy T.H."/>
            <person name="Haas B."/>
            <person name="Maiti R."/>
            <person name="Wu D."/>
            <person name="Peterson J."/>
            <person name="Van Aken S."/>
            <person name="Pai G."/>
            <person name="Militscher J."/>
            <person name="Sellers P."/>
            <person name="Gill J.E."/>
            <person name="Feldblyum T.V."/>
            <person name="Preuss D."/>
            <person name="Lin X."/>
            <person name="Nierman W.C."/>
            <person name="Salzberg S.L."/>
            <person name="White O."/>
            <person name="Venter J.C."/>
            <person name="Fraser C.M."/>
            <person name="Kaneko T."/>
            <person name="Nakamura Y."/>
            <person name="Sato S."/>
            <person name="Kato T."/>
            <person name="Asamizu E."/>
            <person name="Sasamoto S."/>
            <person name="Kimura T."/>
            <person name="Idesawa K."/>
            <person name="Kawashima K."/>
            <person name="Kishida Y."/>
            <person name="Kiyokawa C."/>
            <person name="Kohara M."/>
            <person name="Matsumoto M."/>
            <person name="Matsuno A."/>
            <person name="Muraki A."/>
            <person name="Nakayama S."/>
            <person name="Nakazaki N."/>
            <person name="Shinpo S."/>
            <person name="Takeuchi C."/>
            <person name="Wada T."/>
            <person name="Watanabe A."/>
            <person name="Yamada M."/>
            <person name="Yasuda M."/>
            <person name="Tabata S."/>
        </authorList>
    </citation>
    <scope>NUCLEOTIDE SEQUENCE [LARGE SCALE GENOMIC DNA]</scope>
    <source>
        <strain>cv. Columbia</strain>
    </source>
</reference>
<reference key="2">
    <citation type="journal article" date="2017" name="Plant J.">
        <title>Araport11: a complete reannotation of the Arabidopsis thaliana reference genome.</title>
        <authorList>
            <person name="Cheng C.Y."/>
            <person name="Krishnakumar V."/>
            <person name="Chan A.P."/>
            <person name="Thibaud-Nissen F."/>
            <person name="Schobel S."/>
            <person name="Town C.D."/>
        </authorList>
    </citation>
    <scope>GENOME REANNOTATION</scope>
    <source>
        <strain>cv. Columbia</strain>
    </source>
</reference>
<reference key="3">
    <citation type="journal article" date="2003" name="Mol. Biol. Evol.">
        <title>The basic helix-loop-helix transcription factor family in plants: a genome-wide study of protein structure and functional diversity.</title>
        <authorList>
            <person name="Heim M.A."/>
            <person name="Jakoby M."/>
            <person name="Werber M."/>
            <person name="Martin C."/>
            <person name="Weisshaar B."/>
            <person name="Bailey P.C."/>
        </authorList>
    </citation>
    <scope>GENE FAMILY</scope>
    <scope>NOMENCLATURE</scope>
</reference>
<reference key="4">
    <citation type="journal article" date="2003" name="Plant Cell">
        <title>The Arabidopsis basic/helix-loop-helix transcription factor family.</title>
        <authorList>
            <person name="Toledo-Ortiz G."/>
            <person name="Huq E."/>
            <person name="Quail P.H."/>
        </authorList>
    </citation>
    <scope>GENE FAMILY</scope>
</reference>
<reference key="5">
    <citation type="journal article" date="2003" name="Plant Cell">
        <title>Update on the basic helix-loop-helix transcription factor gene family in Arabidopsis thaliana.</title>
        <authorList>
            <person name="Bailey P.C."/>
            <person name="Martin C."/>
            <person name="Toledo-Ortiz G."/>
            <person name="Quail P.H."/>
            <person name="Huq E."/>
            <person name="Heim M.A."/>
            <person name="Jakoby M."/>
            <person name="Werber M."/>
            <person name="Weisshaar B."/>
        </authorList>
    </citation>
    <scope>GENE FAMILY</scope>
    <scope>NOMENCLATURE</scope>
</reference>
<name>BH107_ARATH</name>
<evidence type="ECO:0000255" key="1">
    <source>
        <dbReference type="PROSITE-ProRule" id="PRU00981"/>
    </source>
</evidence>
<evidence type="ECO:0000305" key="2"/>
<keyword id="KW-0025">Alternative splicing</keyword>
<keyword id="KW-0238">DNA-binding</keyword>
<keyword id="KW-0539">Nucleus</keyword>
<keyword id="KW-1185">Reference proteome</keyword>
<keyword id="KW-0804">Transcription</keyword>
<keyword id="KW-0805">Transcription regulation</keyword>
<dbReference type="EMBL" id="AL390921">
    <property type="protein sequence ID" value="CAC00740.1"/>
    <property type="molecule type" value="Genomic_DNA"/>
</dbReference>
<dbReference type="EMBL" id="CP002686">
    <property type="protein sequence ID" value="AEE79563.1"/>
    <property type="molecule type" value="Genomic_DNA"/>
</dbReference>
<dbReference type="PIR" id="T51265">
    <property type="entry name" value="T51265"/>
</dbReference>
<dbReference type="RefSeq" id="NP_191236.1">
    <molecule id="Q9LET0-1"/>
    <property type="nucleotide sequence ID" value="NM_115536.2"/>
</dbReference>
<dbReference type="SMR" id="Q9LET0"/>
<dbReference type="BioGRID" id="10160">
    <property type="interactions" value="8"/>
</dbReference>
<dbReference type="FunCoup" id="Q9LET0">
    <property type="interactions" value="80"/>
</dbReference>
<dbReference type="IntAct" id="Q9LET0">
    <property type="interactions" value="7"/>
</dbReference>
<dbReference type="STRING" id="3702.Q9LET0"/>
<dbReference type="PaxDb" id="3702-AT3G56770.1"/>
<dbReference type="ProteomicsDB" id="240790">
    <molecule id="Q9LET0-1"/>
</dbReference>
<dbReference type="EnsemblPlants" id="AT3G56770.1">
    <molecule id="Q9LET0-1"/>
    <property type="protein sequence ID" value="AT3G56770.1"/>
    <property type="gene ID" value="AT3G56770"/>
</dbReference>
<dbReference type="GeneID" id="824844"/>
<dbReference type="Gramene" id="AT3G56770.1">
    <molecule id="Q9LET0-1"/>
    <property type="protein sequence ID" value="AT3G56770.1"/>
    <property type="gene ID" value="AT3G56770"/>
</dbReference>
<dbReference type="KEGG" id="ath:AT3G56770"/>
<dbReference type="Araport" id="AT3G56770"/>
<dbReference type="TAIR" id="AT3G56770"/>
<dbReference type="eggNOG" id="KOG3561">
    <property type="taxonomic scope" value="Eukaryota"/>
</dbReference>
<dbReference type="HOGENOM" id="CLU_063967_1_0_1"/>
<dbReference type="InParanoid" id="Q9LET0"/>
<dbReference type="OMA" id="IFKVSFC"/>
<dbReference type="PhylomeDB" id="Q9LET0"/>
<dbReference type="PRO" id="PR:Q9LET0"/>
<dbReference type="Proteomes" id="UP000006548">
    <property type="component" value="Chromosome 3"/>
</dbReference>
<dbReference type="ExpressionAtlas" id="Q9LET0">
    <property type="expression patterns" value="baseline and differential"/>
</dbReference>
<dbReference type="GO" id="GO:0005634">
    <property type="term" value="C:nucleus"/>
    <property type="evidence" value="ECO:0007669"/>
    <property type="project" value="UniProtKB-SubCell"/>
</dbReference>
<dbReference type="GO" id="GO:0003677">
    <property type="term" value="F:DNA binding"/>
    <property type="evidence" value="ECO:0007669"/>
    <property type="project" value="UniProtKB-KW"/>
</dbReference>
<dbReference type="GO" id="GO:0003700">
    <property type="term" value="F:DNA-binding transcription factor activity"/>
    <property type="evidence" value="ECO:0000250"/>
    <property type="project" value="TAIR"/>
</dbReference>
<dbReference type="GO" id="GO:0046983">
    <property type="term" value="F:protein dimerization activity"/>
    <property type="evidence" value="ECO:0007669"/>
    <property type="project" value="InterPro"/>
</dbReference>
<dbReference type="GO" id="GO:0006355">
    <property type="term" value="P:regulation of DNA-templated transcription"/>
    <property type="evidence" value="ECO:0000304"/>
    <property type="project" value="TAIR"/>
</dbReference>
<dbReference type="CDD" id="cd04873">
    <property type="entry name" value="ACT_UUR-ACR-like"/>
    <property type="match status" value="1"/>
</dbReference>
<dbReference type="CDD" id="cd11455">
    <property type="entry name" value="bHLH_AtAIG1_like"/>
    <property type="match status" value="1"/>
</dbReference>
<dbReference type="FunFam" id="4.10.280.10:FF:000070">
    <property type="entry name" value="transcription factor bHLH30"/>
    <property type="match status" value="1"/>
</dbReference>
<dbReference type="Gene3D" id="4.10.280.10">
    <property type="entry name" value="Helix-loop-helix DNA-binding domain"/>
    <property type="match status" value="1"/>
</dbReference>
<dbReference type="InterPro" id="IPR045865">
    <property type="entry name" value="ACT-like_dom_sf"/>
</dbReference>
<dbReference type="InterPro" id="IPR045847">
    <property type="entry name" value="AIG1-like"/>
</dbReference>
<dbReference type="InterPro" id="IPR011598">
    <property type="entry name" value="bHLH_dom"/>
</dbReference>
<dbReference type="InterPro" id="IPR036638">
    <property type="entry name" value="HLH_DNA-bd_sf"/>
</dbReference>
<dbReference type="PANTHER" id="PTHR45844:SF19">
    <property type="entry name" value="TRANSCRIPTION FACTOR BHLH106-RELATED"/>
    <property type="match status" value="1"/>
</dbReference>
<dbReference type="PANTHER" id="PTHR45844">
    <property type="entry name" value="TRANSCRIPTION FACTOR BHLH30"/>
    <property type="match status" value="1"/>
</dbReference>
<dbReference type="Pfam" id="PF00010">
    <property type="entry name" value="HLH"/>
    <property type="match status" value="1"/>
</dbReference>
<dbReference type="SMART" id="SM00353">
    <property type="entry name" value="HLH"/>
    <property type="match status" value="1"/>
</dbReference>
<dbReference type="SUPFAM" id="SSF55021">
    <property type="entry name" value="ACT-like"/>
    <property type="match status" value="1"/>
</dbReference>
<dbReference type="SUPFAM" id="SSF47459">
    <property type="entry name" value="HLH, helix-loop-helix DNA-binding domain"/>
    <property type="match status" value="1"/>
</dbReference>
<dbReference type="PROSITE" id="PS50888">
    <property type="entry name" value="BHLH"/>
    <property type="match status" value="1"/>
</dbReference>
<accession>Q9LET0</accession>